<accession>Q73PN1</accession>
<protein>
    <recommendedName>
        <fullName evidence="1">Large ribosomal subunit protein uL3</fullName>
    </recommendedName>
    <alternativeName>
        <fullName evidence="3">50S ribosomal protein L3</fullName>
    </alternativeName>
</protein>
<name>RL3_TREDE</name>
<comment type="function">
    <text evidence="1">One of the primary rRNA binding proteins, it binds directly near the 3'-end of the 23S rRNA, where it nucleates assembly of the 50S subunit.</text>
</comment>
<comment type="subunit">
    <text evidence="1">Part of the 50S ribosomal subunit. Forms a cluster with proteins L14 and L19.</text>
</comment>
<comment type="similarity">
    <text evidence="1">Belongs to the universal ribosomal protein uL3 family.</text>
</comment>
<keyword id="KW-1185">Reference proteome</keyword>
<keyword id="KW-0687">Ribonucleoprotein</keyword>
<keyword id="KW-0689">Ribosomal protein</keyword>
<keyword id="KW-0694">RNA-binding</keyword>
<keyword id="KW-0699">rRNA-binding</keyword>
<proteinExistence type="inferred from homology"/>
<reference key="1">
    <citation type="journal article" date="2004" name="Proc. Natl. Acad. Sci. U.S.A.">
        <title>Comparison of the genome of the oral pathogen Treponema denticola with other spirochete genomes.</title>
        <authorList>
            <person name="Seshadri R."/>
            <person name="Myers G.S.A."/>
            <person name="Tettelin H."/>
            <person name="Eisen J.A."/>
            <person name="Heidelberg J.F."/>
            <person name="Dodson R.J."/>
            <person name="Davidsen T.M."/>
            <person name="DeBoy R.T."/>
            <person name="Fouts D.E."/>
            <person name="Haft D.H."/>
            <person name="Selengut J."/>
            <person name="Ren Q."/>
            <person name="Brinkac L.M."/>
            <person name="Madupu R."/>
            <person name="Kolonay J.F."/>
            <person name="Durkin S.A."/>
            <person name="Daugherty S.C."/>
            <person name="Shetty J."/>
            <person name="Shvartsbeyn A."/>
            <person name="Gebregeorgis E."/>
            <person name="Geer K."/>
            <person name="Tsegaye G."/>
            <person name="Malek J.A."/>
            <person name="Ayodeji B."/>
            <person name="Shatsman S."/>
            <person name="McLeod M.P."/>
            <person name="Smajs D."/>
            <person name="Howell J.K."/>
            <person name="Pal S."/>
            <person name="Amin A."/>
            <person name="Vashisth P."/>
            <person name="McNeill T.Z."/>
            <person name="Xiang Q."/>
            <person name="Sodergren E."/>
            <person name="Baca E."/>
            <person name="Weinstock G.M."/>
            <person name="Norris S.J."/>
            <person name="Fraser C.M."/>
            <person name="Paulsen I.T."/>
        </authorList>
    </citation>
    <scope>NUCLEOTIDE SEQUENCE [LARGE SCALE GENOMIC DNA]</scope>
    <source>
        <strain>ATCC 35405 / DSM 14222 / CIP 103919 / JCM 8153 / KCTC 15104</strain>
    </source>
</reference>
<gene>
    <name evidence="1" type="primary">rplC</name>
    <name type="ordered locus">TDE_0767</name>
</gene>
<feature type="chain" id="PRO_0000241431" description="Large ribosomal subunit protein uL3">
    <location>
        <begin position="1"/>
        <end position="208"/>
    </location>
</feature>
<feature type="region of interest" description="Disordered" evidence="2">
    <location>
        <begin position="134"/>
        <end position="159"/>
    </location>
</feature>
<feature type="compositionally biased region" description="Polar residues" evidence="2">
    <location>
        <begin position="144"/>
        <end position="158"/>
    </location>
</feature>
<dbReference type="EMBL" id="AE017226">
    <property type="protein sequence ID" value="AAS11258.1"/>
    <property type="molecule type" value="Genomic_DNA"/>
</dbReference>
<dbReference type="RefSeq" id="NP_971377.1">
    <property type="nucleotide sequence ID" value="NC_002967.9"/>
</dbReference>
<dbReference type="RefSeq" id="WP_002669995.1">
    <property type="nucleotide sequence ID" value="NC_002967.9"/>
</dbReference>
<dbReference type="SMR" id="Q73PN1"/>
<dbReference type="STRING" id="243275.TDE_0767"/>
<dbReference type="PaxDb" id="243275-TDE_0767"/>
<dbReference type="GeneID" id="2740307"/>
<dbReference type="KEGG" id="tde:TDE_0767"/>
<dbReference type="PATRIC" id="fig|243275.7.peg.740"/>
<dbReference type="eggNOG" id="COG0087">
    <property type="taxonomic scope" value="Bacteria"/>
</dbReference>
<dbReference type="HOGENOM" id="CLU_044142_4_1_12"/>
<dbReference type="OrthoDB" id="9806135at2"/>
<dbReference type="Proteomes" id="UP000008212">
    <property type="component" value="Chromosome"/>
</dbReference>
<dbReference type="GO" id="GO:0022625">
    <property type="term" value="C:cytosolic large ribosomal subunit"/>
    <property type="evidence" value="ECO:0007669"/>
    <property type="project" value="TreeGrafter"/>
</dbReference>
<dbReference type="GO" id="GO:0019843">
    <property type="term" value="F:rRNA binding"/>
    <property type="evidence" value="ECO:0007669"/>
    <property type="project" value="UniProtKB-UniRule"/>
</dbReference>
<dbReference type="GO" id="GO:0003735">
    <property type="term" value="F:structural constituent of ribosome"/>
    <property type="evidence" value="ECO:0007669"/>
    <property type="project" value="InterPro"/>
</dbReference>
<dbReference type="GO" id="GO:0006412">
    <property type="term" value="P:translation"/>
    <property type="evidence" value="ECO:0007669"/>
    <property type="project" value="UniProtKB-UniRule"/>
</dbReference>
<dbReference type="FunFam" id="2.40.30.10:FF:000004">
    <property type="entry name" value="50S ribosomal protein L3"/>
    <property type="match status" value="1"/>
</dbReference>
<dbReference type="Gene3D" id="2.40.30.10">
    <property type="entry name" value="Translation factors"/>
    <property type="match status" value="2"/>
</dbReference>
<dbReference type="HAMAP" id="MF_01325_B">
    <property type="entry name" value="Ribosomal_uL3_B"/>
    <property type="match status" value="1"/>
</dbReference>
<dbReference type="InterPro" id="IPR000597">
    <property type="entry name" value="Ribosomal_uL3"/>
</dbReference>
<dbReference type="InterPro" id="IPR019927">
    <property type="entry name" value="Ribosomal_uL3_bac/org-type"/>
</dbReference>
<dbReference type="InterPro" id="IPR019926">
    <property type="entry name" value="Ribosomal_uL3_CS"/>
</dbReference>
<dbReference type="InterPro" id="IPR009000">
    <property type="entry name" value="Transl_B-barrel_sf"/>
</dbReference>
<dbReference type="NCBIfam" id="TIGR03625">
    <property type="entry name" value="L3_bact"/>
    <property type="match status" value="1"/>
</dbReference>
<dbReference type="PANTHER" id="PTHR11229">
    <property type="entry name" value="50S RIBOSOMAL PROTEIN L3"/>
    <property type="match status" value="1"/>
</dbReference>
<dbReference type="PANTHER" id="PTHR11229:SF16">
    <property type="entry name" value="LARGE RIBOSOMAL SUBUNIT PROTEIN UL3C"/>
    <property type="match status" value="1"/>
</dbReference>
<dbReference type="Pfam" id="PF00297">
    <property type="entry name" value="Ribosomal_L3"/>
    <property type="match status" value="1"/>
</dbReference>
<dbReference type="SUPFAM" id="SSF50447">
    <property type="entry name" value="Translation proteins"/>
    <property type="match status" value="1"/>
</dbReference>
<dbReference type="PROSITE" id="PS00474">
    <property type="entry name" value="RIBOSOMAL_L3"/>
    <property type="match status" value="1"/>
</dbReference>
<organism>
    <name type="scientific">Treponema denticola (strain ATCC 35405 / DSM 14222 / CIP 103919 / JCM 8153 / KCTC 15104)</name>
    <dbReference type="NCBI Taxonomy" id="243275"/>
    <lineage>
        <taxon>Bacteria</taxon>
        <taxon>Pseudomonadati</taxon>
        <taxon>Spirochaetota</taxon>
        <taxon>Spirochaetia</taxon>
        <taxon>Spirochaetales</taxon>
        <taxon>Treponemataceae</taxon>
        <taxon>Treponema</taxon>
    </lineage>
</organism>
<evidence type="ECO:0000255" key="1">
    <source>
        <dbReference type="HAMAP-Rule" id="MF_01325"/>
    </source>
</evidence>
<evidence type="ECO:0000256" key="2">
    <source>
        <dbReference type="SAM" id="MobiDB-lite"/>
    </source>
</evidence>
<evidence type="ECO:0000305" key="3"/>
<sequence>MIGLIGKKIGMTQIFNEVGHLMPVTVIQVEPNTVVALKDKEKFGYSSVVLGLGELKEKHTSKPYAGQFSGDIKPLKLLKEFRDFDKEVAVGDKLGVEAFEKVSYLDITAISKGKGFQGVMKRWGYGGGRASHGSKFHREAGSTGHCTTPGRSFKNTTMPGRMGFDKVTVQNLQIVKIDPELGVIMVRGSVPGKKDATVFLKSAVKRAK</sequence>